<accession>Q924K8</accession>
<accession>Q8VC18</accession>
<sequence>MAANMYRVGDYVYFENSSSNPYLIRRIEELNKTASGNVEAKVVCFYRRRDISNTLIMLADKHAKETEEESETPVEADLTEKQKHQLKHRELFLSRQYESLPATHIRGKCSVALLNETESVLSYLDKEDTFFYSLVYDPSVKTLLADKGEIRVGPKYQADIPDMLPEDSDEREQSKLEVKVWDPNSPLTDRQIDQFLVVARAVGTFARALDCSSSVRQPSLHMSAAAASRDITLFHAMDTLYRHGYDLSSAISVLVPLGGPVLCRDEMEEWSASEACLFEEALEKYGKDFNDIRQDFLPWKSLTSIIEYYYMWKTTDRYVQQKRLKAAEAESKLKQVYIPTYKPNPNQISSSNGKAGTVNGAVGTQFQPQSALLGRACESCYATQSHQWYSWGPPNMQCRLCATCWLYWKKYGGLKMPTQSDEEKSPSPTAEDPRARSHMSRQALQGMPVRNTGSPKSAVKTRQAFFLRTTYFTKIARQVCKSTLRLRQAARRPFVAINYAAIRAEYADRHAELSGSPLKSRSTRKPLSCIIGYLEIHPAKKPNVIRSPPSLQTPATKRMLAAPNHTSLSILGKRNYSHHNGLDGPERWLSR</sequence>
<dbReference type="EMBL" id="AF288138">
    <property type="protein sequence ID" value="AAK83045.1"/>
    <property type="molecule type" value="mRNA"/>
</dbReference>
<dbReference type="EMBL" id="BC022124">
    <property type="protein sequence ID" value="AAH22124.1"/>
    <property type="molecule type" value="mRNA"/>
</dbReference>
<dbReference type="CCDS" id="CCDS28997.1">
    <molecule id="Q924K8-1"/>
</dbReference>
<dbReference type="RefSeq" id="NP_001164525.1">
    <property type="nucleotide sequence ID" value="NM_001171054.1"/>
</dbReference>
<dbReference type="RefSeq" id="NP_473423.1">
    <molecule id="Q924K8-1"/>
    <property type="nucleotide sequence ID" value="NM_054082.2"/>
</dbReference>
<dbReference type="PDB" id="2CRG">
    <property type="method" value="NMR"/>
    <property type="chains" value="A=267-323"/>
</dbReference>
<dbReference type="PDBsum" id="2CRG"/>
<dbReference type="SMR" id="Q924K8"/>
<dbReference type="BioGRID" id="228046">
    <property type="interactions" value="16"/>
</dbReference>
<dbReference type="ComplexPortal" id="CPX-953">
    <property type="entry name" value="MBD2/NuRD nucleosome remodeling and deacetylase complex"/>
</dbReference>
<dbReference type="ComplexPortal" id="CPX-954">
    <property type="entry name" value="MBD3/NuRD nucleosome remodeling and deacetylase complex"/>
</dbReference>
<dbReference type="CORUM" id="Q924K8"/>
<dbReference type="DIP" id="DIP-61664N"/>
<dbReference type="FunCoup" id="Q924K8">
    <property type="interactions" value="5121"/>
</dbReference>
<dbReference type="IntAct" id="Q924K8">
    <property type="interactions" value="5"/>
</dbReference>
<dbReference type="STRING" id="10090.ENSMUSP00000068931"/>
<dbReference type="iPTMnet" id="Q924K8"/>
<dbReference type="PhosphoSitePlus" id="Q924K8"/>
<dbReference type="jPOST" id="Q924K8"/>
<dbReference type="PaxDb" id="10090-ENSMUSP00000068931"/>
<dbReference type="PeptideAtlas" id="Q924K8"/>
<dbReference type="ProteomicsDB" id="290067">
    <molecule id="Q924K8-1"/>
</dbReference>
<dbReference type="ProteomicsDB" id="290068">
    <molecule id="Q924K8-2"/>
</dbReference>
<dbReference type="Pumba" id="Q924K8"/>
<dbReference type="Antibodypedia" id="29760">
    <property type="antibodies" value="274 antibodies from 28 providers"/>
</dbReference>
<dbReference type="DNASU" id="116871"/>
<dbReference type="Ensembl" id="ENSMUST00000067826.15">
    <molecule id="Q924K8-1"/>
    <property type="protein sequence ID" value="ENSMUSP00000068931.9"/>
    <property type="gene ID" value="ENSMUSG00000055817.19"/>
</dbReference>
<dbReference type="GeneID" id="116871"/>
<dbReference type="KEGG" id="mmu:116871"/>
<dbReference type="UCSC" id="uc012axw.1">
    <molecule id="Q924K8-1"/>
    <property type="organism name" value="mouse"/>
</dbReference>
<dbReference type="AGR" id="MGI:2151172"/>
<dbReference type="CTD" id="57504"/>
<dbReference type="MGI" id="MGI:2151172">
    <property type="gene designation" value="Mta3"/>
</dbReference>
<dbReference type="VEuPathDB" id="HostDB:ENSMUSG00000055817"/>
<dbReference type="eggNOG" id="KOG3554">
    <property type="taxonomic scope" value="Eukaryota"/>
</dbReference>
<dbReference type="GeneTree" id="ENSGT01030000234573"/>
<dbReference type="InParanoid" id="Q924K8"/>
<dbReference type="OMA" id="KRACRMP"/>
<dbReference type="OrthoDB" id="2193595at2759"/>
<dbReference type="PhylomeDB" id="Q924K8"/>
<dbReference type="TreeFam" id="TF106444"/>
<dbReference type="Reactome" id="R-MMU-3214815">
    <property type="pathway name" value="HDACs deacetylate histones"/>
</dbReference>
<dbReference type="Reactome" id="R-MMU-73762">
    <property type="pathway name" value="RNA Polymerase I Transcription Initiation"/>
</dbReference>
<dbReference type="Reactome" id="R-MMU-8943724">
    <property type="pathway name" value="Regulation of PTEN gene transcription"/>
</dbReference>
<dbReference type="BioGRID-ORCS" id="116871">
    <property type="hits" value="4 hits in 84 CRISPR screens"/>
</dbReference>
<dbReference type="ChiTaRS" id="Mta3">
    <property type="organism name" value="mouse"/>
</dbReference>
<dbReference type="EvolutionaryTrace" id="Q924K8"/>
<dbReference type="PRO" id="PR:Q924K8"/>
<dbReference type="Proteomes" id="UP000000589">
    <property type="component" value="Chromosome 17"/>
</dbReference>
<dbReference type="RNAct" id="Q924K8">
    <property type="molecule type" value="protein"/>
</dbReference>
<dbReference type="Bgee" id="ENSMUSG00000055817">
    <property type="expression patterns" value="Expressed in placenta labyrinth and 254 other cell types or tissues"/>
</dbReference>
<dbReference type="ExpressionAtlas" id="Q924K8">
    <property type="expression patterns" value="baseline and differential"/>
</dbReference>
<dbReference type="GO" id="GO:0005737">
    <property type="term" value="C:cytoplasm"/>
    <property type="evidence" value="ECO:0000314"/>
    <property type="project" value="MGI"/>
</dbReference>
<dbReference type="GO" id="GO:0005654">
    <property type="term" value="C:nucleoplasm"/>
    <property type="evidence" value="ECO:0000304"/>
    <property type="project" value="Reactome"/>
</dbReference>
<dbReference type="GO" id="GO:0005634">
    <property type="term" value="C:nucleus"/>
    <property type="evidence" value="ECO:0000314"/>
    <property type="project" value="MGI"/>
</dbReference>
<dbReference type="GO" id="GO:0016581">
    <property type="term" value="C:NuRD complex"/>
    <property type="evidence" value="ECO:0000250"/>
    <property type="project" value="UniProtKB"/>
</dbReference>
<dbReference type="GO" id="GO:0003682">
    <property type="term" value="F:chromatin binding"/>
    <property type="evidence" value="ECO:0007669"/>
    <property type="project" value="InterPro"/>
</dbReference>
<dbReference type="GO" id="GO:0044877">
    <property type="term" value="F:protein-containing complex binding"/>
    <property type="evidence" value="ECO:0000314"/>
    <property type="project" value="MGI"/>
</dbReference>
<dbReference type="GO" id="GO:0043565">
    <property type="term" value="F:sequence-specific DNA binding"/>
    <property type="evidence" value="ECO:0007669"/>
    <property type="project" value="InterPro"/>
</dbReference>
<dbReference type="GO" id="GO:0008270">
    <property type="term" value="F:zinc ion binding"/>
    <property type="evidence" value="ECO:0007669"/>
    <property type="project" value="UniProtKB-KW"/>
</dbReference>
<dbReference type="GO" id="GO:0008283">
    <property type="term" value="P:cell population proliferation"/>
    <property type="evidence" value="ECO:0000315"/>
    <property type="project" value="MGI"/>
</dbReference>
<dbReference type="GO" id="GO:0006338">
    <property type="term" value="P:chromatin remodeling"/>
    <property type="evidence" value="ECO:0000266"/>
    <property type="project" value="ComplexPortal"/>
</dbReference>
<dbReference type="GO" id="GO:0000086">
    <property type="term" value="P:G2/M transition of mitotic cell cycle"/>
    <property type="evidence" value="ECO:0000315"/>
    <property type="project" value="MGI"/>
</dbReference>
<dbReference type="GO" id="GO:1990739">
    <property type="term" value="P:granulosa cell proliferation"/>
    <property type="evidence" value="ECO:0000315"/>
    <property type="project" value="MGI"/>
</dbReference>
<dbReference type="GO" id="GO:0045892">
    <property type="term" value="P:negative regulation of DNA-templated transcription"/>
    <property type="evidence" value="ECO:0000303"/>
    <property type="project" value="ComplexPortal"/>
</dbReference>
<dbReference type="GO" id="GO:0045893">
    <property type="term" value="P:positive regulation of DNA-templated transcription"/>
    <property type="evidence" value="ECO:0000303"/>
    <property type="project" value="ComplexPortal"/>
</dbReference>
<dbReference type="GO" id="GO:0010971">
    <property type="term" value="P:positive regulation of G2/M transition of mitotic cell cycle"/>
    <property type="evidence" value="ECO:0000315"/>
    <property type="project" value="MGI"/>
</dbReference>
<dbReference type="GO" id="GO:1904197">
    <property type="term" value="P:positive regulation of granulosa cell proliferation"/>
    <property type="evidence" value="ECO:0000315"/>
    <property type="project" value="MGI"/>
</dbReference>
<dbReference type="GO" id="GO:0042659">
    <property type="term" value="P:regulation of cell fate specification"/>
    <property type="evidence" value="ECO:0000303"/>
    <property type="project" value="ComplexPortal"/>
</dbReference>
<dbReference type="GO" id="GO:2000736">
    <property type="term" value="P:regulation of stem cell differentiation"/>
    <property type="evidence" value="ECO:0000303"/>
    <property type="project" value="ComplexPortal"/>
</dbReference>
<dbReference type="CDD" id="cd04709">
    <property type="entry name" value="BAH_MTA"/>
    <property type="match status" value="1"/>
</dbReference>
<dbReference type="CDD" id="cd11661">
    <property type="entry name" value="SANT_MTA3_like"/>
    <property type="match status" value="1"/>
</dbReference>
<dbReference type="CDD" id="cd00202">
    <property type="entry name" value="ZnF_GATA"/>
    <property type="match status" value="1"/>
</dbReference>
<dbReference type="FunFam" id="2.30.30.490:FF:000022">
    <property type="entry name" value="Blast:Metastasis-associated protein MTA3"/>
    <property type="match status" value="1"/>
</dbReference>
<dbReference type="FunFam" id="1.10.10.60:FF:000012">
    <property type="entry name" value="Metastasis-associated 1 family, member 3"/>
    <property type="match status" value="1"/>
</dbReference>
<dbReference type="FunFam" id="4.10.1240.50:FF:000001">
    <property type="entry name" value="Metastasis-associated 1 family, member 3"/>
    <property type="match status" value="1"/>
</dbReference>
<dbReference type="FunFam" id="2.30.30.490:FF:000012">
    <property type="entry name" value="metastasis-associated protein MTA3 isoform X1"/>
    <property type="match status" value="1"/>
</dbReference>
<dbReference type="Gene3D" id="2.30.30.490">
    <property type="match status" value="1"/>
</dbReference>
<dbReference type="Gene3D" id="4.10.1240.50">
    <property type="match status" value="1"/>
</dbReference>
<dbReference type="Gene3D" id="1.10.10.60">
    <property type="entry name" value="Homeodomain-like"/>
    <property type="match status" value="1"/>
</dbReference>
<dbReference type="InterPro" id="IPR001025">
    <property type="entry name" value="BAH_dom"/>
</dbReference>
<dbReference type="InterPro" id="IPR043151">
    <property type="entry name" value="BAH_sf"/>
</dbReference>
<dbReference type="InterPro" id="IPR000949">
    <property type="entry name" value="ELM2_dom"/>
</dbReference>
<dbReference type="InterPro" id="IPR009057">
    <property type="entry name" value="Homeodomain-like_sf"/>
</dbReference>
<dbReference type="InterPro" id="IPR040138">
    <property type="entry name" value="MIER/MTA"/>
</dbReference>
<dbReference type="InterPro" id="IPR035170">
    <property type="entry name" value="MTA1_R1"/>
</dbReference>
<dbReference type="InterPro" id="IPR001005">
    <property type="entry name" value="SANT/Myb"/>
</dbReference>
<dbReference type="InterPro" id="IPR017884">
    <property type="entry name" value="SANT_dom"/>
</dbReference>
<dbReference type="InterPro" id="IPR000679">
    <property type="entry name" value="Znf_GATA"/>
</dbReference>
<dbReference type="PANTHER" id="PTHR10865">
    <property type="entry name" value="METASTASIS-ASSOCIATED PROTEIN AND MESODERM INDUCTION EARLY RESPONSE PROTEIN"/>
    <property type="match status" value="1"/>
</dbReference>
<dbReference type="PANTHER" id="PTHR10865:SF6">
    <property type="entry name" value="METASTASIS-ASSOCIATED PROTEIN MTA3"/>
    <property type="match status" value="1"/>
</dbReference>
<dbReference type="Pfam" id="PF01426">
    <property type="entry name" value="BAH"/>
    <property type="match status" value="1"/>
</dbReference>
<dbReference type="Pfam" id="PF01448">
    <property type="entry name" value="ELM2"/>
    <property type="match status" value="1"/>
</dbReference>
<dbReference type="Pfam" id="PF00320">
    <property type="entry name" value="GATA"/>
    <property type="match status" value="1"/>
</dbReference>
<dbReference type="Pfam" id="PF17226">
    <property type="entry name" value="MTA_R1"/>
    <property type="match status" value="1"/>
</dbReference>
<dbReference type="Pfam" id="PF00249">
    <property type="entry name" value="Myb_DNA-binding"/>
    <property type="match status" value="1"/>
</dbReference>
<dbReference type="SMART" id="SM00439">
    <property type="entry name" value="BAH"/>
    <property type="match status" value="1"/>
</dbReference>
<dbReference type="SMART" id="SM01189">
    <property type="entry name" value="ELM2"/>
    <property type="match status" value="1"/>
</dbReference>
<dbReference type="SMART" id="SM00717">
    <property type="entry name" value="SANT"/>
    <property type="match status" value="1"/>
</dbReference>
<dbReference type="SMART" id="SM00401">
    <property type="entry name" value="ZnF_GATA"/>
    <property type="match status" value="1"/>
</dbReference>
<dbReference type="SUPFAM" id="SSF46689">
    <property type="entry name" value="Homeodomain-like"/>
    <property type="match status" value="1"/>
</dbReference>
<dbReference type="PROSITE" id="PS51038">
    <property type="entry name" value="BAH"/>
    <property type="match status" value="1"/>
</dbReference>
<dbReference type="PROSITE" id="PS51156">
    <property type="entry name" value="ELM2"/>
    <property type="match status" value="1"/>
</dbReference>
<dbReference type="PROSITE" id="PS51293">
    <property type="entry name" value="SANT"/>
    <property type="match status" value="1"/>
</dbReference>
<gene>
    <name type="primary">Mta3</name>
</gene>
<evidence type="ECO:0000250" key="1">
    <source>
        <dbReference type="UniProtKB" id="Q9BTC8"/>
    </source>
</evidence>
<evidence type="ECO:0000255" key="2">
    <source>
        <dbReference type="PROSITE-ProRule" id="PRU00370"/>
    </source>
</evidence>
<evidence type="ECO:0000255" key="3">
    <source>
        <dbReference type="PROSITE-ProRule" id="PRU00512"/>
    </source>
</evidence>
<evidence type="ECO:0000255" key="4">
    <source>
        <dbReference type="PROSITE-ProRule" id="PRU00624"/>
    </source>
</evidence>
<evidence type="ECO:0000256" key="5">
    <source>
        <dbReference type="SAM" id="MobiDB-lite"/>
    </source>
</evidence>
<evidence type="ECO:0000269" key="6">
    <source>
    </source>
</evidence>
<evidence type="ECO:0000269" key="7">
    <source>
    </source>
</evidence>
<evidence type="ECO:0000303" key="8">
    <source>
    </source>
</evidence>
<evidence type="ECO:0000305" key="9"/>
<evidence type="ECO:0007744" key="10">
    <source>
    </source>
</evidence>
<evidence type="ECO:0007829" key="11">
    <source>
        <dbReference type="PDB" id="2CRG"/>
    </source>
</evidence>
<proteinExistence type="evidence at protein level"/>
<protein>
    <recommendedName>
        <fullName>Metastasis-associated protein MTA3</fullName>
    </recommendedName>
</protein>
<organism>
    <name type="scientific">Mus musculus</name>
    <name type="common">Mouse</name>
    <dbReference type="NCBI Taxonomy" id="10090"/>
    <lineage>
        <taxon>Eukaryota</taxon>
        <taxon>Metazoa</taxon>
        <taxon>Chordata</taxon>
        <taxon>Craniata</taxon>
        <taxon>Vertebrata</taxon>
        <taxon>Euteleostomi</taxon>
        <taxon>Mammalia</taxon>
        <taxon>Eutheria</taxon>
        <taxon>Euarchontoglires</taxon>
        <taxon>Glires</taxon>
        <taxon>Rodentia</taxon>
        <taxon>Myomorpha</taxon>
        <taxon>Muroidea</taxon>
        <taxon>Muridae</taxon>
        <taxon>Murinae</taxon>
        <taxon>Mus</taxon>
        <taxon>Mus</taxon>
    </lineage>
</organism>
<name>MTA3_MOUSE</name>
<keyword id="KW-0002">3D-structure</keyword>
<keyword id="KW-0025">Alternative splicing</keyword>
<keyword id="KW-0963">Cytoplasm</keyword>
<keyword id="KW-0238">DNA-binding</keyword>
<keyword id="KW-0479">Metal-binding</keyword>
<keyword id="KW-0539">Nucleus</keyword>
<keyword id="KW-0597">Phosphoprotein</keyword>
<keyword id="KW-1185">Reference proteome</keyword>
<keyword id="KW-0862">Zinc</keyword>
<keyword id="KW-0863">Zinc-finger</keyword>
<feature type="chain" id="PRO_0000083499" description="Metastasis-associated protein MTA3">
    <location>
        <begin position="1"/>
        <end position="591"/>
    </location>
</feature>
<feature type="domain" description="BAH" evidence="2">
    <location>
        <begin position="1"/>
        <end position="147"/>
    </location>
</feature>
<feature type="domain" description="ELM2" evidence="3">
    <location>
        <begin position="148"/>
        <end position="258"/>
    </location>
</feature>
<feature type="domain" description="SANT" evidence="4">
    <location>
        <begin position="265"/>
        <end position="317"/>
    </location>
</feature>
<feature type="zinc finger region" description="GATA-type; atypical">
    <location>
        <begin position="377"/>
        <end position="404"/>
    </location>
</feature>
<feature type="region of interest" description="Disordered" evidence="5">
    <location>
        <begin position="417"/>
        <end position="456"/>
    </location>
</feature>
<feature type="compositionally biased region" description="Basic and acidic residues" evidence="5">
    <location>
        <begin position="421"/>
        <end position="435"/>
    </location>
</feature>
<feature type="modified residue" description="Phosphoserine" evidence="10">
    <location>
        <position position="425"/>
    </location>
</feature>
<feature type="modified residue" description="Phosphoserine" evidence="10">
    <location>
        <position position="427"/>
    </location>
</feature>
<feature type="modified residue" description="Phosphothreonine" evidence="1">
    <location>
        <position position="452"/>
    </location>
</feature>
<feature type="modified residue" description="Phosphoserine" evidence="1">
    <location>
        <position position="516"/>
    </location>
</feature>
<feature type="splice variant" id="VSP_001605" description="In isoform 2." evidence="8">
    <original>YADRHAE</original>
    <variation>CKTLFNS</variation>
    <location>
        <begin position="506"/>
        <end position="512"/>
    </location>
</feature>
<feature type="splice variant" id="VSP_001606" description="In isoform 2." evidence="8">
    <location>
        <begin position="513"/>
        <end position="591"/>
    </location>
</feature>
<feature type="sequence conflict" description="In Ref. 2; AAH22124." evidence="9" ref="2">
    <original>E</original>
    <variation>EG</variation>
    <location>
        <position position="166"/>
    </location>
</feature>
<feature type="helix" evidence="11">
    <location>
        <begin position="272"/>
        <end position="284"/>
    </location>
</feature>
<feature type="helix" evidence="11">
    <location>
        <begin position="289"/>
        <end position="294"/>
    </location>
</feature>
<feature type="strand" evidence="11">
    <location>
        <begin position="298"/>
        <end position="300"/>
    </location>
</feature>
<feature type="helix" evidence="11">
    <location>
        <begin position="302"/>
        <end position="313"/>
    </location>
</feature>
<comment type="function">
    <text evidence="1">Acts as a component of the histone deacetylase NuRD complex which participates in the remodeling of chromatin. Plays a role in maintenance of the normal epithelial architecture through the repression of SNAI1 transcription in a histone deacetylase-dependent manner, and thus the regulation of E-cadherin levels. Contributes to transcriptional repression by BCL6.</text>
</comment>
<comment type="subunit">
    <text evidence="1 7">Component of the nucleosome remodeling and deacetylase (NuRD) repressor complex, composed of core proteins MTA1, MTA2, MTA3, RBBP4, RBBP7, HDAC1, HDAC2, MBD2, MBD3, and peripherally associated proteins CDK2AP1, CDK2AP2, GATAD2A, GATAD2B, CHD3, CHD4 and CHD5. The exact stoichiometry of the NuRD complex is unknown, and some subunits such as MBD2 and MBD3, GATAD2A and GATAD2B, and CHD3, CHD4 and CHD5 define mutually exclusive NuRD complexes. Interacts with BCL6. Interacts with NACC2 (By similarity). Interacts with PWWP2B (PubMed:34180153).</text>
</comment>
<comment type="subcellular location">
    <subcellularLocation>
        <location evidence="3 4 6">Nucleus</location>
    </subcellularLocation>
    <subcellularLocation>
        <location evidence="6">Cytoplasm</location>
    </subcellularLocation>
</comment>
<comment type="alternative products">
    <event type="alternative splicing"/>
    <isoform>
        <id>Q924K8-1</id>
        <name>1</name>
        <sequence type="displayed"/>
    </isoform>
    <isoform>
        <id>Q924K8-2</id>
        <name>2</name>
        <sequence type="described" ref="VSP_001605 VSP_001606"/>
    </isoform>
</comment>
<comment type="tissue specificity">
    <text>Expressed in heart, brain, spleen, lung, liver and kidney.</text>
</comment>
<comment type="similarity">
    <text evidence="9">Belongs to the metastasis-associated protein family.</text>
</comment>
<reference key="1">
    <citation type="journal article" date="2001" name="Gene">
        <title>Differential expression and subcellular distribution of the mouse metastasis-associated proteins Mta1 and Mta3.</title>
        <authorList>
            <person name="Simpson A."/>
            <person name="Uitto J."/>
            <person name="Rodeck U."/>
            <person name="Mahoney M.G."/>
        </authorList>
    </citation>
    <scope>NUCLEOTIDE SEQUENCE [MRNA] (ISOFORM 1)</scope>
    <scope>SUBCELLULAR LOCATION</scope>
    <source>
        <strain>129/Sv</strain>
    </source>
</reference>
<reference key="2">
    <citation type="journal article" date="2004" name="Genome Res.">
        <title>The status, quality, and expansion of the NIH full-length cDNA project: the Mammalian Gene Collection (MGC).</title>
        <authorList>
            <consortium name="The MGC Project Team"/>
        </authorList>
    </citation>
    <scope>NUCLEOTIDE SEQUENCE [LARGE SCALE MRNA] (ISOFORM 2)</scope>
    <source>
        <tissue>Liver</tissue>
    </source>
</reference>
<reference key="3">
    <citation type="journal article" date="2010" name="Cell">
        <title>A tissue-specific atlas of mouse protein phosphorylation and expression.</title>
        <authorList>
            <person name="Huttlin E.L."/>
            <person name="Jedrychowski M.P."/>
            <person name="Elias J.E."/>
            <person name="Goswami T."/>
            <person name="Rad R."/>
            <person name="Beausoleil S.A."/>
            <person name="Villen J."/>
            <person name="Haas W."/>
            <person name="Sowa M.E."/>
            <person name="Gygi S.P."/>
        </authorList>
    </citation>
    <scope>PHOSPHORYLATION [LARGE SCALE ANALYSIS] AT SER-425 AND SER-427</scope>
    <scope>IDENTIFICATION BY MASS SPECTROMETRY [LARGE SCALE ANALYSIS]</scope>
    <source>
        <tissue>Brain</tissue>
        <tissue>Kidney</tissue>
        <tissue>Spleen</tissue>
    </source>
</reference>
<reference key="4">
    <citation type="journal article" date="2021" name="Adv. Sci.">
        <title>PWWP2B Fine-Tunes Adipose Thermogenesis by Stabilizing HDACs in a NuRD Subcomplex.</title>
        <authorList>
            <person name="Yan L."/>
            <person name="Jin W."/>
            <person name="Zhao Q."/>
            <person name="Cui X."/>
            <person name="Shi T."/>
            <person name="Xu Y."/>
            <person name="Li F."/>
            <person name="Jin W."/>
            <person name="Zhang Z."/>
            <person name="Zhang Z."/>
            <person name="Tang Q.Q."/>
            <person name="Pan D."/>
        </authorList>
    </citation>
    <scope>INTERACTION WITH PWWP2B</scope>
</reference>
<reference key="5">
    <citation type="submission" date="2005-11" db="PDB data bank">
        <title>Solution structure of the myb-like DNA-binding domain of mouse MTA3 protein.</title>
        <authorList>
            <consortium name="RIKEN structural genomics initiative (RSGI)"/>
        </authorList>
    </citation>
    <scope>STRUCTURE BY NMR OF 267-323</scope>
</reference>